<proteinExistence type="inferred from homology"/>
<keyword id="KW-0963">Cytoplasm</keyword>
<keyword id="KW-0444">Lipid biosynthesis</keyword>
<keyword id="KW-0443">Lipid metabolism</keyword>
<keyword id="KW-0460">Magnesium</keyword>
<keyword id="KW-0479">Metal-binding</keyword>
<keyword id="KW-0594">Phospholipid biosynthesis</keyword>
<keyword id="KW-1208">Phospholipid metabolism</keyword>
<keyword id="KW-0808">Transferase</keyword>
<reference key="1">
    <citation type="journal article" date="2009" name="Stand. Genomic Sci.">
        <title>Complete genome sequence of Methanoculleus marisnigri Romesser et al. 1981 type strain JR1.</title>
        <authorList>
            <person name="Anderson I.J."/>
            <person name="Sieprawska-Lupa M."/>
            <person name="Lapidus A."/>
            <person name="Nolan M."/>
            <person name="Copeland A."/>
            <person name="Glavina Del Rio T."/>
            <person name="Tice H."/>
            <person name="Dalin E."/>
            <person name="Barry K."/>
            <person name="Saunders E."/>
            <person name="Han C."/>
            <person name="Brettin T."/>
            <person name="Detter J.C."/>
            <person name="Bruce D."/>
            <person name="Mikhailova N."/>
            <person name="Pitluck S."/>
            <person name="Hauser L."/>
            <person name="Land M."/>
            <person name="Lucas S."/>
            <person name="Richardson P."/>
            <person name="Whitman W.B."/>
            <person name="Kyrpides N.C."/>
        </authorList>
    </citation>
    <scope>NUCLEOTIDE SEQUENCE [LARGE SCALE GENOMIC DNA]</scope>
    <source>
        <strain>ATCC 35101 / DSM 1498 / JR1</strain>
    </source>
</reference>
<organism>
    <name type="scientific">Methanoculleus marisnigri (strain ATCC 35101 / DSM 1498 / JR1)</name>
    <dbReference type="NCBI Taxonomy" id="368407"/>
    <lineage>
        <taxon>Archaea</taxon>
        <taxon>Methanobacteriati</taxon>
        <taxon>Methanobacteriota</taxon>
        <taxon>Stenosarchaea group</taxon>
        <taxon>Methanomicrobia</taxon>
        <taxon>Methanomicrobiales</taxon>
        <taxon>Methanomicrobiaceae</taxon>
        <taxon>Methanoculleus</taxon>
    </lineage>
</organism>
<gene>
    <name type="ordered locus">Memar_0769</name>
</gene>
<comment type="function">
    <text evidence="1">Prenyltransferase that catalyzes the transfer of the geranylgeranyl moiety of geranylgeranyl diphosphate (GGPP) to the C3 hydroxyl of sn-glycerol-1-phosphate (G1P). This reaction is the first ether-bond-formation step in the biosynthesis of archaeal membrane lipids.</text>
</comment>
<comment type="catalytic activity">
    <reaction evidence="1">
        <text>sn-glycerol 1-phosphate + (2E,6E,10E)-geranylgeranyl diphosphate = sn-3-O-(geranylgeranyl)glycerol 1-phosphate + diphosphate</text>
        <dbReference type="Rhea" id="RHEA:23404"/>
        <dbReference type="ChEBI" id="CHEBI:33019"/>
        <dbReference type="ChEBI" id="CHEBI:57677"/>
        <dbReference type="ChEBI" id="CHEBI:57685"/>
        <dbReference type="ChEBI" id="CHEBI:58756"/>
        <dbReference type="EC" id="2.5.1.41"/>
    </reaction>
</comment>
<comment type="cofactor">
    <cofactor evidence="1">
        <name>Mg(2+)</name>
        <dbReference type="ChEBI" id="CHEBI:18420"/>
    </cofactor>
</comment>
<comment type="pathway">
    <text evidence="1">Membrane lipid metabolism; glycerophospholipid metabolism.</text>
</comment>
<comment type="subcellular location">
    <subcellularLocation>
        <location evidence="1">Cytoplasm</location>
    </subcellularLocation>
</comment>
<comment type="similarity">
    <text evidence="1">Belongs to the GGGP/HepGP synthase family. Group I subfamily.</text>
</comment>
<dbReference type="EC" id="2.5.1.41" evidence="1"/>
<dbReference type="EMBL" id="CP000562">
    <property type="protein sequence ID" value="ABN56702.1"/>
    <property type="molecule type" value="Genomic_DNA"/>
</dbReference>
<dbReference type="RefSeq" id="WP_011843613.1">
    <property type="nucleotide sequence ID" value="NC_009051.1"/>
</dbReference>
<dbReference type="SMR" id="A3CTK2"/>
<dbReference type="STRING" id="368407.Memar_0769"/>
<dbReference type="GeneID" id="4847847"/>
<dbReference type="KEGG" id="mem:Memar_0769"/>
<dbReference type="eggNOG" id="arCOG01085">
    <property type="taxonomic scope" value="Archaea"/>
</dbReference>
<dbReference type="HOGENOM" id="CLU_095211_0_0_2"/>
<dbReference type="OrthoDB" id="49758at2157"/>
<dbReference type="UniPathway" id="UPA00940"/>
<dbReference type="Proteomes" id="UP000002146">
    <property type="component" value="Chromosome"/>
</dbReference>
<dbReference type="GO" id="GO:0005737">
    <property type="term" value="C:cytoplasm"/>
    <property type="evidence" value="ECO:0007669"/>
    <property type="project" value="UniProtKB-SubCell"/>
</dbReference>
<dbReference type="GO" id="GO:0000287">
    <property type="term" value="F:magnesium ion binding"/>
    <property type="evidence" value="ECO:0007669"/>
    <property type="project" value="UniProtKB-UniRule"/>
</dbReference>
<dbReference type="GO" id="GO:0047294">
    <property type="term" value="F:phosphoglycerol geranylgeranyltransferase activity"/>
    <property type="evidence" value="ECO:0007669"/>
    <property type="project" value="UniProtKB-UniRule"/>
</dbReference>
<dbReference type="GO" id="GO:0046474">
    <property type="term" value="P:glycerophospholipid biosynthetic process"/>
    <property type="evidence" value="ECO:0007669"/>
    <property type="project" value="UniProtKB-UniRule"/>
</dbReference>
<dbReference type="CDD" id="cd02812">
    <property type="entry name" value="PcrB_like"/>
    <property type="match status" value="1"/>
</dbReference>
<dbReference type="Gene3D" id="3.20.20.390">
    <property type="entry name" value="FMN-linked oxidoreductases"/>
    <property type="match status" value="1"/>
</dbReference>
<dbReference type="HAMAP" id="MF_00112">
    <property type="entry name" value="GGGP_HepGP_synthase"/>
    <property type="match status" value="1"/>
</dbReference>
<dbReference type="InterPro" id="IPR039074">
    <property type="entry name" value="GGGP/HepGP_synthase_I"/>
</dbReference>
<dbReference type="InterPro" id="IPR038597">
    <property type="entry name" value="GGGP/HepGP_synthase_sf"/>
</dbReference>
<dbReference type="InterPro" id="IPR008205">
    <property type="entry name" value="GGGP_HepGP_synthase"/>
</dbReference>
<dbReference type="InterPro" id="IPR026438">
    <property type="entry name" value="GGGP_synthase_archaea"/>
</dbReference>
<dbReference type="NCBIfam" id="TIGR01768">
    <property type="entry name" value="GGGP-family"/>
    <property type="match status" value="1"/>
</dbReference>
<dbReference type="NCBIfam" id="TIGR04146">
    <property type="entry name" value="GGGPS_Afulg"/>
    <property type="match status" value="1"/>
</dbReference>
<dbReference type="NCBIfam" id="NF003199">
    <property type="entry name" value="PRK04169.1-3"/>
    <property type="match status" value="1"/>
</dbReference>
<dbReference type="PANTHER" id="PTHR40029">
    <property type="match status" value="1"/>
</dbReference>
<dbReference type="PANTHER" id="PTHR40029:SF2">
    <property type="entry name" value="HEPTAPRENYLGLYCERYL PHOSPHATE SYNTHASE"/>
    <property type="match status" value="1"/>
</dbReference>
<dbReference type="Pfam" id="PF01884">
    <property type="entry name" value="PcrB"/>
    <property type="match status" value="1"/>
</dbReference>
<dbReference type="SUPFAM" id="SSF51395">
    <property type="entry name" value="FMN-linked oxidoreductases"/>
    <property type="match status" value="1"/>
</dbReference>
<sequence>MHANWKTWAHVTKLDPDKRLPRGAVEEIATSGTDALMLSGTLNVTRENLQELLDLVSAYGLPLVVEPASPDCAIFDGGIDHLFVPSVLNTNDVRWIVGKHYAWLRQASGIDWEMVVPEAYIVLNPNSAVGRVTGADCSLSTGDVAAFAQVADRYFRFPIVYIEYSGTYGDPAIVQAASEAVENATLYYGGGIRSAEQAAEMGRYADTIVVGNAVYEEGIDVLRATVRAVQ</sequence>
<name>GGGPS_METMJ</name>
<feature type="chain" id="PRO_0000350682" description="Geranylgeranylglyceryl phosphate synthase">
    <location>
        <begin position="1"/>
        <end position="230"/>
    </location>
</feature>
<feature type="binding site" evidence="1">
    <location>
        <position position="13"/>
    </location>
    <ligand>
        <name>sn-glycerol 1-phosphate</name>
        <dbReference type="ChEBI" id="CHEBI:57685"/>
    </ligand>
</feature>
<feature type="binding site" evidence="1">
    <location>
        <position position="15"/>
    </location>
    <ligand>
        <name>Mg(2+)</name>
        <dbReference type="ChEBI" id="CHEBI:18420"/>
    </ligand>
</feature>
<feature type="binding site" evidence="1">
    <location>
        <position position="41"/>
    </location>
    <ligand>
        <name>Mg(2+)</name>
        <dbReference type="ChEBI" id="CHEBI:18420"/>
    </ligand>
</feature>
<feature type="binding site" evidence="1">
    <location>
        <begin position="161"/>
        <end position="166"/>
    </location>
    <ligand>
        <name>sn-glycerol 1-phosphate</name>
        <dbReference type="ChEBI" id="CHEBI:57685"/>
    </ligand>
</feature>
<feature type="binding site" evidence="1">
    <location>
        <position position="191"/>
    </location>
    <ligand>
        <name>sn-glycerol 1-phosphate</name>
        <dbReference type="ChEBI" id="CHEBI:57685"/>
    </ligand>
</feature>
<feature type="binding site" evidence="1">
    <location>
        <begin position="211"/>
        <end position="212"/>
    </location>
    <ligand>
        <name>sn-glycerol 1-phosphate</name>
        <dbReference type="ChEBI" id="CHEBI:57685"/>
    </ligand>
</feature>
<accession>A3CTK2</accession>
<evidence type="ECO:0000255" key="1">
    <source>
        <dbReference type="HAMAP-Rule" id="MF_00112"/>
    </source>
</evidence>
<protein>
    <recommendedName>
        <fullName evidence="1">Geranylgeranylglyceryl phosphate synthase</fullName>
        <shortName evidence="1">GGGP synthase</shortName>
        <shortName evidence="1">GGGPS</shortName>
        <ecNumber evidence="1">2.5.1.41</ecNumber>
    </recommendedName>
    <alternativeName>
        <fullName evidence="1">(S)-3-O-geranylgeranylglyceryl phosphate synthase</fullName>
    </alternativeName>
    <alternativeName>
        <fullName evidence="1">Phosphoglycerol geranylgeranyltransferase</fullName>
    </alternativeName>
</protein>